<keyword id="KW-0963">Cytoplasm</keyword>
<keyword id="KW-0324">Glycolysis</keyword>
<keyword id="KW-0520">NAD</keyword>
<keyword id="KW-0521">NADP</keyword>
<keyword id="KW-0560">Oxidoreductase</keyword>
<sequence>MMSEPVRVGLNGFGRIGRNVFRASLHSDDVEIVGINDVMDDSEIDYFAQYDSVMGELEGASVDDGVLTVDGTDFEAGIFHETDPTQLPWDDLDVDVAFEATGIFRTKEDASQHLDAGADKVLISAPPKGDEPVKQLVYGVNHDEYDGEDVVSNASCTTNSITPVAKVLDEEFGINAGQLTTVHAYTGSQNLMDGPNGKPRRRRAAAENIIPTSTGAAQAATEVLPELEGKLDGMAIRVPVPNGSITEFVVDLDDDVTESDVNAAFEDAAAGELEGVLGVTSDDVVSSDILGDPYSTQVDLQSTNVVSGMTKILTWYDNEYGFSNRMLDVAEYITE</sequence>
<gene>
    <name type="primary">gap</name>
</gene>
<reference key="1">
    <citation type="journal article" date="1996" name="Plant Mol. Biol.">
        <title>Higher-plant chloroplast and cytosolic 3-phosphoglycerate kinases: a case of endosymbiotic gene replacement.</title>
        <authorList>
            <person name="Brinkmann H."/>
            <person name="Martin W."/>
        </authorList>
    </citation>
    <scope>NUCLEOTIDE SEQUENCE [GENOMIC DNA]</scope>
    <source>
        <strain>ATCC 29715 / DSM 3756 / JCM 8877 / NBRC 14741 / NCIMB 2082</strain>
    </source>
</reference>
<protein>
    <recommendedName>
        <fullName>Glyceraldehyde-3-phosphate dehydrogenase</fullName>
        <ecNumber>1.2.1.59</ecNumber>
    </recommendedName>
    <alternativeName>
        <fullName>NAD(P)-dependent glyceraldehyde-3-phosphate dehydrogenase</fullName>
        <shortName>GAPDH</shortName>
    </alternativeName>
</protein>
<evidence type="ECO:0000250" key="1"/>
<evidence type="ECO:0000255" key="2">
    <source>
        <dbReference type="PROSITE-ProRule" id="PRU10009"/>
    </source>
</evidence>
<evidence type="ECO:0000305" key="3"/>
<name>G3P_HALVA</name>
<feature type="chain" id="PRO_0000145739" description="Glyceraldehyde-3-phosphate dehydrogenase">
    <location>
        <begin position="1"/>
        <end position="335"/>
    </location>
</feature>
<feature type="active site" description="Nucleophile" evidence="2">
    <location>
        <position position="156"/>
    </location>
</feature>
<feature type="binding site" evidence="1">
    <location>
        <begin position="15"/>
        <end position="16"/>
    </location>
    <ligand>
        <name>NAD(+)</name>
        <dbReference type="ChEBI" id="CHEBI:57540"/>
    </ligand>
</feature>
<feature type="binding site" evidence="1">
    <location>
        <position position="37"/>
    </location>
    <ligand>
        <name>NAD(+)</name>
        <dbReference type="ChEBI" id="CHEBI:57540"/>
    </ligand>
</feature>
<feature type="binding site" evidence="1">
    <location>
        <begin position="155"/>
        <end position="157"/>
    </location>
    <ligand>
        <name>D-glyceraldehyde 3-phosphate</name>
        <dbReference type="ChEBI" id="CHEBI:59776"/>
    </ligand>
</feature>
<feature type="binding site" evidence="1">
    <location>
        <position position="186"/>
    </location>
    <ligand>
        <name>D-glyceraldehyde 3-phosphate</name>
        <dbReference type="ChEBI" id="CHEBI:59776"/>
    </ligand>
</feature>
<feature type="binding site" evidence="1">
    <location>
        <position position="201"/>
    </location>
    <ligand>
        <name>D-glyceraldehyde 3-phosphate</name>
        <dbReference type="ChEBI" id="CHEBI:59776"/>
    </ligand>
</feature>
<feature type="binding site" evidence="1">
    <location>
        <begin position="214"/>
        <end position="215"/>
    </location>
    <ligand>
        <name>D-glyceraldehyde 3-phosphate</name>
        <dbReference type="ChEBI" id="CHEBI:59776"/>
    </ligand>
</feature>
<feature type="binding site" evidence="1">
    <location>
        <position position="237"/>
    </location>
    <ligand>
        <name>D-glyceraldehyde 3-phosphate</name>
        <dbReference type="ChEBI" id="CHEBI:59776"/>
    </ligand>
</feature>
<feature type="binding site" evidence="1">
    <location>
        <position position="301"/>
    </location>
    <ligand>
        <name>NAD(+)</name>
        <dbReference type="ChEBI" id="CHEBI:57540"/>
    </ligand>
</feature>
<feature type="binding site" evidence="1">
    <location>
        <position position="318"/>
    </location>
    <ligand>
        <name>NAD(+)</name>
        <dbReference type="ChEBI" id="CHEBI:57540"/>
    </ligand>
</feature>
<dbReference type="EC" id="1.2.1.59"/>
<dbReference type="EMBL" id="L47295">
    <property type="protein sequence ID" value="AAB03730.1"/>
    <property type="molecule type" value="Genomic_DNA"/>
</dbReference>
<dbReference type="PIR" id="S65043">
    <property type="entry name" value="S65043"/>
</dbReference>
<dbReference type="SMR" id="Q48335"/>
<dbReference type="STRING" id="28442.SAMN05443574_102191"/>
<dbReference type="UniPathway" id="UPA00109">
    <property type="reaction ID" value="UER00184"/>
</dbReference>
<dbReference type="GO" id="GO:0005737">
    <property type="term" value="C:cytoplasm"/>
    <property type="evidence" value="ECO:0007669"/>
    <property type="project" value="UniProtKB-SubCell"/>
</dbReference>
<dbReference type="GO" id="GO:0004365">
    <property type="term" value="F:glyceraldehyde-3-phosphate dehydrogenase (NAD+) (phosphorylating) activity"/>
    <property type="evidence" value="ECO:0007669"/>
    <property type="project" value="RHEA"/>
</dbReference>
<dbReference type="GO" id="GO:0047100">
    <property type="term" value="F:glyceraldehyde-3-phosphate dehydrogenase (NADP+) (phosphorylating) activity"/>
    <property type="evidence" value="ECO:0007669"/>
    <property type="project" value="RHEA"/>
</dbReference>
<dbReference type="GO" id="GO:0051287">
    <property type="term" value="F:NAD binding"/>
    <property type="evidence" value="ECO:0007669"/>
    <property type="project" value="InterPro"/>
</dbReference>
<dbReference type="GO" id="GO:0050661">
    <property type="term" value="F:NADP binding"/>
    <property type="evidence" value="ECO:0007669"/>
    <property type="project" value="InterPro"/>
</dbReference>
<dbReference type="GO" id="GO:0006006">
    <property type="term" value="P:glucose metabolic process"/>
    <property type="evidence" value="ECO:0007669"/>
    <property type="project" value="InterPro"/>
</dbReference>
<dbReference type="GO" id="GO:0006096">
    <property type="term" value="P:glycolytic process"/>
    <property type="evidence" value="ECO:0007669"/>
    <property type="project" value="UniProtKB-UniPathway"/>
</dbReference>
<dbReference type="CDD" id="cd18126">
    <property type="entry name" value="GAPDH_I_C"/>
    <property type="match status" value="1"/>
</dbReference>
<dbReference type="CDD" id="cd05214">
    <property type="entry name" value="GAPDH_I_N"/>
    <property type="match status" value="1"/>
</dbReference>
<dbReference type="FunFam" id="3.30.360.10:FF:000002">
    <property type="entry name" value="Glyceraldehyde-3-phosphate dehydrogenase"/>
    <property type="match status" value="1"/>
</dbReference>
<dbReference type="FunFam" id="3.40.50.720:FF:000001">
    <property type="entry name" value="Glyceraldehyde-3-phosphate dehydrogenase"/>
    <property type="match status" value="1"/>
</dbReference>
<dbReference type="Gene3D" id="3.30.360.10">
    <property type="entry name" value="Dihydrodipicolinate Reductase, domain 2"/>
    <property type="match status" value="1"/>
</dbReference>
<dbReference type="Gene3D" id="3.40.50.720">
    <property type="entry name" value="NAD(P)-binding Rossmann-like Domain"/>
    <property type="match status" value="1"/>
</dbReference>
<dbReference type="InterPro" id="IPR020831">
    <property type="entry name" value="GlycerAld/Erythrose_P_DH"/>
</dbReference>
<dbReference type="InterPro" id="IPR020830">
    <property type="entry name" value="GlycerAld_3-P_DH_AS"/>
</dbReference>
<dbReference type="InterPro" id="IPR020829">
    <property type="entry name" value="GlycerAld_3-P_DH_cat"/>
</dbReference>
<dbReference type="InterPro" id="IPR020828">
    <property type="entry name" value="GlycerAld_3-P_DH_NAD(P)-bd"/>
</dbReference>
<dbReference type="InterPro" id="IPR006424">
    <property type="entry name" value="Glyceraldehyde-3-P_DH_1"/>
</dbReference>
<dbReference type="InterPro" id="IPR036291">
    <property type="entry name" value="NAD(P)-bd_dom_sf"/>
</dbReference>
<dbReference type="NCBIfam" id="TIGR01534">
    <property type="entry name" value="GAPDH-I"/>
    <property type="match status" value="1"/>
</dbReference>
<dbReference type="PANTHER" id="PTHR43148">
    <property type="entry name" value="GLYCERALDEHYDE-3-PHOSPHATE DEHYDROGENASE 2"/>
    <property type="match status" value="1"/>
</dbReference>
<dbReference type="Pfam" id="PF02800">
    <property type="entry name" value="Gp_dh_C"/>
    <property type="match status" value="1"/>
</dbReference>
<dbReference type="Pfam" id="PF00044">
    <property type="entry name" value="Gp_dh_N"/>
    <property type="match status" value="1"/>
</dbReference>
<dbReference type="PIRSF" id="PIRSF000149">
    <property type="entry name" value="GAP_DH"/>
    <property type="match status" value="1"/>
</dbReference>
<dbReference type="PRINTS" id="PR00078">
    <property type="entry name" value="G3PDHDRGNASE"/>
</dbReference>
<dbReference type="SMART" id="SM00846">
    <property type="entry name" value="Gp_dh_N"/>
    <property type="match status" value="1"/>
</dbReference>
<dbReference type="SUPFAM" id="SSF55347">
    <property type="entry name" value="Glyceraldehyde-3-phosphate dehydrogenase-like, C-terminal domain"/>
    <property type="match status" value="1"/>
</dbReference>
<dbReference type="SUPFAM" id="SSF51735">
    <property type="entry name" value="NAD(P)-binding Rossmann-fold domains"/>
    <property type="match status" value="1"/>
</dbReference>
<dbReference type="PROSITE" id="PS00071">
    <property type="entry name" value="GAPDH"/>
    <property type="match status" value="1"/>
</dbReference>
<proteinExistence type="inferred from homology"/>
<accession>Q48335</accession>
<comment type="catalytic activity">
    <reaction>
        <text>D-glyceraldehyde 3-phosphate + phosphate + NADP(+) = (2R)-3-phospho-glyceroyl phosphate + NADPH + H(+)</text>
        <dbReference type="Rhea" id="RHEA:10296"/>
        <dbReference type="ChEBI" id="CHEBI:15378"/>
        <dbReference type="ChEBI" id="CHEBI:43474"/>
        <dbReference type="ChEBI" id="CHEBI:57604"/>
        <dbReference type="ChEBI" id="CHEBI:57783"/>
        <dbReference type="ChEBI" id="CHEBI:58349"/>
        <dbReference type="ChEBI" id="CHEBI:59776"/>
        <dbReference type="EC" id="1.2.1.59"/>
    </reaction>
</comment>
<comment type="catalytic activity">
    <reaction>
        <text>D-glyceraldehyde 3-phosphate + phosphate + NAD(+) = (2R)-3-phospho-glyceroyl phosphate + NADH + H(+)</text>
        <dbReference type="Rhea" id="RHEA:10300"/>
        <dbReference type="ChEBI" id="CHEBI:15378"/>
        <dbReference type="ChEBI" id="CHEBI:43474"/>
        <dbReference type="ChEBI" id="CHEBI:57540"/>
        <dbReference type="ChEBI" id="CHEBI:57604"/>
        <dbReference type="ChEBI" id="CHEBI:57945"/>
        <dbReference type="ChEBI" id="CHEBI:59776"/>
        <dbReference type="EC" id="1.2.1.59"/>
    </reaction>
</comment>
<comment type="pathway">
    <text>Carbohydrate degradation; glycolysis; pyruvate from D-glyceraldehyde 3-phosphate: step 1/5.</text>
</comment>
<comment type="subunit">
    <text evidence="1">Homotetramer.</text>
</comment>
<comment type="subcellular location">
    <subcellularLocation>
        <location evidence="1">Cytoplasm</location>
    </subcellularLocation>
</comment>
<comment type="similarity">
    <text evidence="3">Belongs to the glyceraldehyde-3-phosphate dehydrogenase family.</text>
</comment>
<organism>
    <name type="scientific">Haloarcula vallismortis</name>
    <name type="common">Halobacterium vallismortis</name>
    <dbReference type="NCBI Taxonomy" id="28442"/>
    <lineage>
        <taxon>Archaea</taxon>
        <taxon>Methanobacteriati</taxon>
        <taxon>Methanobacteriota</taxon>
        <taxon>Stenosarchaea group</taxon>
        <taxon>Halobacteria</taxon>
        <taxon>Halobacteriales</taxon>
        <taxon>Haloarculaceae</taxon>
        <taxon>Haloarcula</taxon>
    </lineage>
</organism>